<comment type="function">
    <text evidence="2">Component of the ubiquinol-cytochrome c reductase complex (complex III or cytochrome b-c1 complex) that is part of the mitochondrial respiratory chain. The b-c1 complex mediates electron transfer from ubiquinol to cytochrome c. Contributes to the generation of a proton gradient across the mitochondrial membrane that is then used for ATP synthesis.</text>
</comment>
<comment type="cofactor">
    <cofactor evidence="2">
        <name>heme b</name>
        <dbReference type="ChEBI" id="CHEBI:60344"/>
    </cofactor>
    <text evidence="2">Binds 2 heme b groups non-covalently.</text>
</comment>
<comment type="subunit">
    <text evidence="2">The cytochrome bc1 complex contains 3 respiratory subunits (MT-CYB, CYC1 and UQCRFS1), 2 core proteins (UQCRC1 and UQCRC2) and probably 6 low-molecular weight proteins.</text>
</comment>
<comment type="subcellular location">
    <subcellularLocation>
        <location evidence="2">Mitochondrion inner membrane</location>
        <topology evidence="2">Multi-pass membrane protein</topology>
    </subcellularLocation>
</comment>
<comment type="miscellaneous">
    <text evidence="1">Heme 1 (or BL or b562) is low-potential and absorbs at about 562 nm, and heme 2 (or BH or b566) is high-potential and absorbs at about 566 nm.</text>
</comment>
<comment type="similarity">
    <text evidence="3 4">Belongs to the cytochrome b family.</text>
</comment>
<comment type="caution">
    <text evidence="2">The full-length protein contains only eight transmembrane helices, not nine as predicted by bioinformatics tools.</text>
</comment>
<evidence type="ECO:0000250" key="1"/>
<evidence type="ECO:0000250" key="2">
    <source>
        <dbReference type="UniProtKB" id="P00157"/>
    </source>
</evidence>
<evidence type="ECO:0000255" key="3">
    <source>
        <dbReference type="PROSITE-ProRule" id="PRU00967"/>
    </source>
</evidence>
<evidence type="ECO:0000255" key="4">
    <source>
        <dbReference type="PROSITE-ProRule" id="PRU00968"/>
    </source>
</evidence>
<organism>
    <name type="scientific">Micrurus tener microgalbineus</name>
    <name type="common">Spotted coral snake</name>
    <name type="synonym">Micrurus fulvius microgalbineus</name>
    <dbReference type="NCBI Taxonomy" id="8636"/>
    <lineage>
        <taxon>Eukaryota</taxon>
        <taxon>Metazoa</taxon>
        <taxon>Chordata</taxon>
        <taxon>Craniata</taxon>
        <taxon>Vertebrata</taxon>
        <taxon>Euteleostomi</taxon>
        <taxon>Lepidosauria</taxon>
        <taxon>Squamata</taxon>
        <taxon>Bifurcata</taxon>
        <taxon>Unidentata</taxon>
        <taxon>Episquamata</taxon>
        <taxon>Toxicofera</taxon>
        <taxon>Serpentes</taxon>
        <taxon>Colubroidea</taxon>
        <taxon>Elapidae</taxon>
        <taxon>Elapinae</taxon>
        <taxon>Micrurus</taxon>
    </lineage>
</organism>
<feature type="chain" id="PRO_0000061180" description="Cytochrome b">
    <location>
        <begin position="1"/>
        <end position="371"/>
    </location>
</feature>
<feature type="transmembrane region" description="Helical" evidence="2">
    <location>
        <begin position="25"/>
        <end position="45"/>
    </location>
</feature>
<feature type="transmembrane region" description="Helical" evidence="2">
    <location>
        <begin position="69"/>
        <end position="90"/>
    </location>
</feature>
<feature type="transmembrane region" description="Helical" evidence="2">
    <location>
        <begin position="105"/>
        <end position="125"/>
    </location>
</feature>
<feature type="transmembrane region" description="Helical" evidence="2">
    <location>
        <begin position="170"/>
        <end position="190"/>
    </location>
</feature>
<feature type="transmembrane region" description="Helical" evidence="2">
    <location>
        <begin position="218"/>
        <end position="238"/>
    </location>
</feature>
<feature type="transmembrane region" description="Helical" evidence="2">
    <location>
        <begin position="280"/>
        <end position="300"/>
    </location>
</feature>
<feature type="transmembrane region" description="Helical" evidence="2">
    <location>
        <begin position="312"/>
        <end position="332"/>
    </location>
</feature>
<feature type="transmembrane region" description="Helical" evidence="2">
    <location>
        <begin position="339"/>
        <end position="358"/>
    </location>
</feature>
<feature type="binding site" description="axial binding residue" evidence="2">
    <location>
        <position position="75"/>
    </location>
    <ligand>
        <name>heme b</name>
        <dbReference type="ChEBI" id="CHEBI:60344"/>
        <label>b562</label>
    </ligand>
    <ligandPart>
        <name>Fe</name>
        <dbReference type="ChEBI" id="CHEBI:18248"/>
    </ligandPart>
</feature>
<feature type="binding site" description="axial binding residue" evidence="2">
    <location>
        <position position="89"/>
    </location>
    <ligand>
        <name>heme b</name>
        <dbReference type="ChEBI" id="CHEBI:60344"/>
        <label>b566</label>
    </ligand>
    <ligandPart>
        <name>Fe</name>
        <dbReference type="ChEBI" id="CHEBI:18248"/>
    </ligandPart>
</feature>
<feature type="binding site" description="axial binding residue" evidence="2">
    <location>
        <position position="174"/>
    </location>
    <ligand>
        <name>heme b</name>
        <dbReference type="ChEBI" id="CHEBI:60344"/>
        <label>b562</label>
    </ligand>
    <ligandPart>
        <name>Fe</name>
        <dbReference type="ChEBI" id="CHEBI:18248"/>
    </ligandPart>
</feature>
<feature type="binding site" description="axial binding residue" evidence="2">
    <location>
        <position position="188"/>
    </location>
    <ligand>
        <name>heme b</name>
        <dbReference type="ChEBI" id="CHEBI:60344"/>
        <label>b566</label>
    </ligand>
    <ligandPart>
        <name>Fe</name>
        <dbReference type="ChEBI" id="CHEBI:18248"/>
    </ligandPart>
</feature>
<feature type="binding site" evidence="2">
    <location>
        <position position="193"/>
    </location>
    <ligand>
        <name>a ubiquinone</name>
        <dbReference type="ChEBI" id="CHEBI:16389"/>
    </ligand>
</feature>
<dbReference type="EMBL" id="U69846">
    <property type="protein sequence ID" value="AAC01884.1"/>
    <property type="molecule type" value="Genomic_DNA"/>
</dbReference>
<dbReference type="GO" id="GO:0005743">
    <property type="term" value="C:mitochondrial inner membrane"/>
    <property type="evidence" value="ECO:0007669"/>
    <property type="project" value="UniProtKB-SubCell"/>
</dbReference>
<dbReference type="GO" id="GO:0046872">
    <property type="term" value="F:metal ion binding"/>
    <property type="evidence" value="ECO:0007669"/>
    <property type="project" value="UniProtKB-KW"/>
</dbReference>
<dbReference type="GO" id="GO:0008121">
    <property type="term" value="F:ubiquinol-cytochrome-c reductase activity"/>
    <property type="evidence" value="ECO:0007669"/>
    <property type="project" value="TreeGrafter"/>
</dbReference>
<dbReference type="GO" id="GO:0006122">
    <property type="term" value="P:mitochondrial electron transport, ubiquinol to cytochrome c"/>
    <property type="evidence" value="ECO:0007669"/>
    <property type="project" value="TreeGrafter"/>
</dbReference>
<dbReference type="CDD" id="cd00284">
    <property type="entry name" value="Cytochrome_b_N"/>
    <property type="match status" value="1"/>
</dbReference>
<dbReference type="Gene3D" id="1.20.810.10">
    <property type="entry name" value="Cytochrome Bc1 Complex, Chain C"/>
    <property type="match status" value="1"/>
</dbReference>
<dbReference type="InterPro" id="IPR005798">
    <property type="entry name" value="Cyt_b/b6_C"/>
</dbReference>
<dbReference type="InterPro" id="IPR036150">
    <property type="entry name" value="Cyt_b/b6_C_sf"/>
</dbReference>
<dbReference type="InterPro" id="IPR005797">
    <property type="entry name" value="Cyt_b/b6_N"/>
</dbReference>
<dbReference type="InterPro" id="IPR027387">
    <property type="entry name" value="Cytb/b6-like_sf"/>
</dbReference>
<dbReference type="InterPro" id="IPR048259">
    <property type="entry name" value="Cytochrome_b_N_euk/bac"/>
</dbReference>
<dbReference type="InterPro" id="IPR016174">
    <property type="entry name" value="Di-haem_cyt_TM"/>
</dbReference>
<dbReference type="PANTHER" id="PTHR19271">
    <property type="entry name" value="CYTOCHROME B"/>
    <property type="match status" value="1"/>
</dbReference>
<dbReference type="PANTHER" id="PTHR19271:SF16">
    <property type="entry name" value="CYTOCHROME B"/>
    <property type="match status" value="1"/>
</dbReference>
<dbReference type="Pfam" id="PF00032">
    <property type="entry name" value="Cytochrom_B_C"/>
    <property type="match status" value="1"/>
</dbReference>
<dbReference type="Pfam" id="PF00033">
    <property type="entry name" value="Cytochrome_B"/>
    <property type="match status" value="1"/>
</dbReference>
<dbReference type="SUPFAM" id="SSF81648">
    <property type="entry name" value="a domain/subunit of cytochrome bc1 complex (Ubiquinol-cytochrome c reductase)"/>
    <property type="match status" value="1"/>
</dbReference>
<dbReference type="SUPFAM" id="SSF81342">
    <property type="entry name" value="Transmembrane di-heme cytochromes"/>
    <property type="match status" value="1"/>
</dbReference>
<dbReference type="PROSITE" id="PS51003">
    <property type="entry name" value="CYTB_CTER"/>
    <property type="match status" value="1"/>
</dbReference>
<dbReference type="PROSITE" id="PS51002">
    <property type="entry name" value="CYTB_NTER"/>
    <property type="match status" value="1"/>
</dbReference>
<keyword id="KW-0249">Electron transport</keyword>
<keyword id="KW-0349">Heme</keyword>
<keyword id="KW-0408">Iron</keyword>
<keyword id="KW-0472">Membrane</keyword>
<keyword id="KW-0479">Metal-binding</keyword>
<keyword id="KW-0496">Mitochondrion</keyword>
<keyword id="KW-0999">Mitochondrion inner membrane</keyword>
<keyword id="KW-0679">Respiratory chain</keyword>
<keyword id="KW-0812">Transmembrane</keyword>
<keyword id="KW-1133">Transmembrane helix</keyword>
<keyword id="KW-0813">Transport</keyword>
<keyword id="KW-0830">Ubiquinone</keyword>
<geneLocation type="mitochondrion"/>
<accession>O48101</accession>
<protein>
    <recommendedName>
        <fullName>Cytochrome b</fullName>
    </recommendedName>
    <alternativeName>
        <fullName>Complex III subunit 3</fullName>
    </alternativeName>
    <alternativeName>
        <fullName>Complex III subunit III</fullName>
    </alternativeName>
    <alternativeName>
        <fullName>Cytochrome b-c1 complex subunit 3</fullName>
    </alternativeName>
    <alternativeName>
        <fullName>Ubiquinol-cytochrome-c reductase complex cytochrome b subunit</fullName>
    </alternativeName>
</protein>
<name>CYB_MICTM</name>
<proteinExistence type="inferred from homology"/>
<sequence>MSNQHALLISNLLPVGSNISTWWNFGSMLLTCLMLQVLTGFFLAIHYTANINLAFSSVVHITRDVPCGWIMQNTHAIGASLFFICIYIHIARGLYYGLYLNKNVWLSGVTLLMTLMATAFFGYVLPWGQMSFWAATVITNLLTAIPYLGVAVTTWLWGGFSINDPTLTRFCALHFILPFIIISLSSIHIILLHNEGSNNPLGTNSDIDKIPFHPYHSYKDFMTTTSMIILLPISLSVSPDLLXDPEKLTKPNPXXXXXXXXXXXXXXXXYGLLRSIPNKLGGTLALLMSILILTLPPFTHTSYIRPMTFRPLSQTLFWTLIATFVMITWTATKPVEPPFITISQLTSIFYFSFFIMNPLLSWTEHKIMMQS</sequence>
<gene>
    <name type="primary">MT-CYB</name>
    <name type="synonym">COB</name>
    <name type="synonym">CYTB</name>
    <name type="synonym">MTCYB</name>
</gene>
<reference key="1">
    <citation type="thesis" date="1997" institute="Queen's University / Kingston" country="Canada">
        <title>Hic Sunt Serpentes -- molecular phylogenetics and the Boidae (Serpentes: Booidea).</title>
        <authorList>
            <person name="Campbell B.N."/>
        </authorList>
    </citation>
    <scope>NUCLEOTIDE SEQUENCE [GENOMIC DNA]</scope>
</reference>